<accession>Q5JEZ2</accession>
<gene>
    <name evidence="1" type="primary">gyaR</name>
    <name type="ordered locus">TK0683</name>
</gene>
<feature type="chain" id="PRO_0000075950" description="Glyoxylate reductase">
    <location>
        <begin position="1"/>
        <end position="333"/>
    </location>
</feature>
<feature type="active site" evidence="1">
    <location>
        <position position="241"/>
    </location>
</feature>
<feature type="active site" evidence="1">
    <location>
        <position position="270"/>
    </location>
</feature>
<feature type="active site" description="Proton donor" evidence="1">
    <location>
        <position position="288"/>
    </location>
</feature>
<feature type="binding site" evidence="1">
    <location>
        <begin position="158"/>
        <end position="161"/>
    </location>
    <ligand>
        <name>NADP(+)</name>
        <dbReference type="ChEBI" id="CHEBI:58349"/>
    </ligand>
</feature>
<feature type="binding site" evidence="1">
    <location>
        <begin position="180"/>
        <end position="182"/>
    </location>
    <ligand>
        <name>NADP(+)</name>
        <dbReference type="ChEBI" id="CHEBI:58349"/>
    </ligand>
</feature>
<feature type="binding site" evidence="1">
    <location>
        <begin position="239"/>
        <end position="241"/>
    </location>
    <ligand>
        <name>NADP(+)</name>
        <dbReference type="ChEBI" id="CHEBI:58349"/>
    </ligand>
</feature>
<feature type="binding site" evidence="1">
    <location>
        <begin position="288"/>
        <end position="290"/>
    </location>
    <ligand>
        <name>NADP(+)</name>
        <dbReference type="ChEBI" id="CHEBI:58349"/>
    </ligand>
</feature>
<comment type="catalytic activity">
    <reaction evidence="1">
        <text>glycolate + NAD(+) = glyoxylate + NADH + H(+)</text>
        <dbReference type="Rhea" id="RHEA:18229"/>
        <dbReference type="ChEBI" id="CHEBI:15378"/>
        <dbReference type="ChEBI" id="CHEBI:29805"/>
        <dbReference type="ChEBI" id="CHEBI:36655"/>
        <dbReference type="ChEBI" id="CHEBI:57540"/>
        <dbReference type="ChEBI" id="CHEBI:57945"/>
        <dbReference type="EC" id="1.1.1.26"/>
    </reaction>
</comment>
<comment type="subunit">
    <text evidence="1">Homodimer.</text>
</comment>
<comment type="subcellular location">
    <subcellularLocation>
        <location evidence="1">Cytoplasm</location>
    </subcellularLocation>
</comment>
<comment type="similarity">
    <text evidence="1">Belongs to the D-isomer specific 2-hydroxyacid dehydrogenase family. GyaR subfamily.</text>
</comment>
<dbReference type="EC" id="1.1.1.26" evidence="1"/>
<dbReference type="EMBL" id="AP006878">
    <property type="protein sequence ID" value="BAD84872.1"/>
    <property type="molecule type" value="Genomic_DNA"/>
</dbReference>
<dbReference type="RefSeq" id="WP_011249634.1">
    <property type="nucleotide sequence ID" value="NC_006624.1"/>
</dbReference>
<dbReference type="SMR" id="Q5JEZ2"/>
<dbReference type="STRING" id="69014.TK0683"/>
<dbReference type="EnsemblBacteria" id="BAD84872">
    <property type="protein sequence ID" value="BAD84872"/>
    <property type="gene ID" value="TK0683"/>
</dbReference>
<dbReference type="GeneID" id="78447197"/>
<dbReference type="KEGG" id="tko:TK0683"/>
<dbReference type="PATRIC" id="fig|69014.16.peg.664"/>
<dbReference type="eggNOG" id="arCOG01755">
    <property type="taxonomic scope" value="Archaea"/>
</dbReference>
<dbReference type="HOGENOM" id="CLU_019796_1_2_2"/>
<dbReference type="InParanoid" id="Q5JEZ2"/>
<dbReference type="OrthoDB" id="34275at2157"/>
<dbReference type="PhylomeDB" id="Q5JEZ2"/>
<dbReference type="Proteomes" id="UP000000536">
    <property type="component" value="Chromosome"/>
</dbReference>
<dbReference type="GO" id="GO:0005829">
    <property type="term" value="C:cytosol"/>
    <property type="evidence" value="ECO:0000318"/>
    <property type="project" value="GO_Central"/>
</dbReference>
<dbReference type="GO" id="GO:0047964">
    <property type="term" value="F:glyoxylate reductase (NADH) activity"/>
    <property type="evidence" value="ECO:0007669"/>
    <property type="project" value="UniProtKB-UniRule"/>
</dbReference>
<dbReference type="GO" id="GO:0030267">
    <property type="term" value="F:glyoxylate reductase (NADPH) activity"/>
    <property type="evidence" value="ECO:0000318"/>
    <property type="project" value="GO_Central"/>
</dbReference>
<dbReference type="GO" id="GO:0016618">
    <property type="term" value="F:hydroxypyruvate reductase [NAD(P)H] activity"/>
    <property type="evidence" value="ECO:0000318"/>
    <property type="project" value="GO_Central"/>
</dbReference>
<dbReference type="GO" id="GO:0051287">
    <property type="term" value="F:NAD binding"/>
    <property type="evidence" value="ECO:0007669"/>
    <property type="project" value="InterPro"/>
</dbReference>
<dbReference type="CDD" id="cd05301">
    <property type="entry name" value="GDH"/>
    <property type="match status" value="1"/>
</dbReference>
<dbReference type="FunFam" id="3.40.50.720:FF:000462">
    <property type="entry name" value="Glyoxylate reductase (NADP+)"/>
    <property type="match status" value="1"/>
</dbReference>
<dbReference type="Gene3D" id="3.40.50.720">
    <property type="entry name" value="NAD(P)-binding Rossmann-like Domain"/>
    <property type="match status" value="2"/>
</dbReference>
<dbReference type="HAMAP" id="MF_00776">
    <property type="entry name" value="GyaR"/>
    <property type="match status" value="1"/>
</dbReference>
<dbReference type="InterPro" id="IPR050223">
    <property type="entry name" value="D-isomer_2-hydroxyacid_DH"/>
</dbReference>
<dbReference type="InterPro" id="IPR006139">
    <property type="entry name" value="D-isomer_2_OHA_DH_cat_dom"/>
</dbReference>
<dbReference type="InterPro" id="IPR029753">
    <property type="entry name" value="D-isomer_DH_CS"/>
</dbReference>
<dbReference type="InterPro" id="IPR029752">
    <property type="entry name" value="D-isomer_DH_CS1"/>
</dbReference>
<dbReference type="InterPro" id="IPR006140">
    <property type="entry name" value="D-isomer_DH_NAD-bd"/>
</dbReference>
<dbReference type="InterPro" id="IPR023519">
    <property type="entry name" value="Glyoxylate_reductase_GyaR"/>
</dbReference>
<dbReference type="InterPro" id="IPR036291">
    <property type="entry name" value="NAD(P)-bd_dom_sf"/>
</dbReference>
<dbReference type="NCBIfam" id="NF009714">
    <property type="entry name" value="PRK13243.1"/>
    <property type="match status" value="1"/>
</dbReference>
<dbReference type="PANTHER" id="PTHR10996">
    <property type="entry name" value="2-HYDROXYACID DEHYDROGENASE-RELATED"/>
    <property type="match status" value="1"/>
</dbReference>
<dbReference type="PANTHER" id="PTHR10996:SF283">
    <property type="entry name" value="GLYOXYLATE_HYDROXYPYRUVATE REDUCTASE B"/>
    <property type="match status" value="1"/>
</dbReference>
<dbReference type="Pfam" id="PF00389">
    <property type="entry name" value="2-Hacid_dh"/>
    <property type="match status" value="1"/>
</dbReference>
<dbReference type="Pfam" id="PF02826">
    <property type="entry name" value="2-Hacid_dh_C"/>
    <property type="match status" value="1"/>
</dbReference>
<dbReference type="SUPFAM" id="SSF52283">
    <property type="entry name" value="Formate/glycerate dehydrogenase catalytic domain-like"/>
    <property type="match status" value="1"/>
</dbReference>
<dbReference type="SUPFAM" id="SSF51735">
    <property type="entry name" value="NAD(P)-binding Rossmann-fold domains"/>
    <property type="match status" value="1"/>
</dbReference>
<dbReference type="PROSITE" id="PS00065">
    <property type="entry name" value="D_2_HYDROXYACID_DH_1"/>
    <property type="match status" value="1"/>
</dbReference>
<dbReference type="PROSITE" id="PS00671">
    <property type="entry name" value="D_2_HYDROXYACID_DH_3"/>
    <property type="match status" value="1"/>
</dbReference>
<sequence>MRPKVFITRAIPENGIEMLKEHFEVEVWPEEREIPREVLLKKVRDVDALVTMLSERIDSEVFDAAPRLRIVANYAVGYDNIDVEEATRRGIYVTNTPDVLTDATADFAWTLLLATARRLIEADHFTRSGEWKRRGIAWHPRWFLGYDVYGKTIGIVGFGRIGQAVARRARGFGMRILYYSRSRKPEAEKELGAEFRSLEDLLRESDFVVLAVPLTKETQYMINEERLRLMKKTAILVNIARGKVVDTKALMKALKEGWIAGAGLDVYEEEPYYNEELFSLKNVVLAPHIGSATYGAREGMAELVARNLIAFKNGEVPPTLVNKEVVKVRKPGF</sequence>
<proteinExistence type="inferred from homology"/>
<name>GYAR_THEKO</name>
<organism>
    <name type="scientific">Thermococcus kodakarensis (strain ATCC BAA-918 / JCM 12380 / KOD1)</name>
    <name type="common">Pyrococcus kodakaraensis (strain KOD1)</name>
    <dbReference type="NCBI Taxonomy" id="69014"/>
    <lineage>
        <taxon>Archaea</taxon>
        <taxon>Methanobacteriati</taxon>
        <taxon>Methanobacteriota</taxon>
        <taxon>Thermococci</taxon>
        <taxon>Thermococcales</taxon>
        <taxon>Thermococcaceae</taxon>
        <taxon>Thermococcus</taxon>
    </lineage>
</organism>
<keyword id="KW-0963">Cytoplasm</keyword>
<keyword id="KW-0520">NAD</keyword>
<keyword id="KW-0560">Oxidoreductase</keyword>
<keyword id="KW-1185">Reference proteome</keyword>
<reference key="1">
    <citation type="journal article" date="2005" name="Genome Res.">
        <title>Complete genome sequence of the hyperthermophilic archaeon Thermococcus kodakaraensis KOD1 and comparison with Pyrococcus genomes.</title>
        <authorList>
            <person name="Fukui T."/>
            <person name="Atomi H."/>
            <person name="Kanai T."/>
            <person name="Matsumi R."/>
            <person name="Fujiwara S."/>
            <person name="Imanaka T."/>
        </authorList>
    </citation>
    <scope>NUCLEOTIDE SEQUENCE [LARGE SCALE GENOMIC DNA]</scope>
    <source>
        <strain>ATCC BAA-918 / JCM 12380 / KOD1</strain>
    </source>
</reference>
<evidence type="ECO:0000255" key="1">
    <source>
        <dbReference type="HAMAP-Rule" id="MF_00776"/>
    </source>
</evidence>
<protein>
    <recommendedName>
        <fullName evidence="1">Glyoxylate reductase</fullName>
        <ecNumber evidence="1">1.1.1.26</ecNumber>
    </recommendedName>
</protein>